<feature type="chain" id="PRO_0000106758" description="Uncharacterized protein MJ0241">
    <location>
        <begin position="1"/>
        <end position="145"/>
    </location>
</feature>
<feature type="domain" description="ACT" evidence="1">
    <location>
        <begin position="78"/>
        <end position="145"/>
    </location>
</feature>
<reference key="1">
    <citation type="journal article" date="1996" name="Science">
        <title>Complete genome sequence of the methanogenic archaeon, Methanococcus jannaschii.</title>
        <authorList>
            <person name="Bult C.J."/>
            <person name="White O."/>
            <person name="Olsen G.J."/>
            <person name="Zhou L."/>
            <person name="Fleischmann R.D."/>
            <person name="Sutton G.G."/>
            <person name="Blake J.A."/>
            <person name="FitzGerald L.M."/>
            <person name="Clayton R.A."/>
            <person name="Gocayne J.D."/>
            <person name="Kerlavage A.R."/>
            <person name="Dougherty B.A."/>
            <person name="Tomb J.-F."/>
            <person name="Adams M.D."/>
            <person name="Reich C.I."/>
            <person name="Overbeek R."/>
            <person name="Kirkness E.F."/>
            <person name="Weinstock K.G."/>
            <person name="Merrick J.M."/>
            <person name="Glodek A."/>
            <person name="Scott J.L."/>
            <person name="Geoghagen N.S.M."/>
            <person name="Weidman J.F."/>
            <person name="Fuhrmann J.L."/>
            <person name="Nguyen D."/>
            <person name="Utterback T.R."/>
            <person name="Kelley J.M."/>
            <person name="Peterson J.D."/>
            <person name="Sadow P.W."/>
            <person name="Hanna M.C."/>
            <person name="Cotton M.D."/>
            <person name="Roberts K.M."/>
            <person name="Hurst M.A."/>
            <person name="Kaine B.P."/>
            <person name="Borodovsky M."/>
            <person name="Klenk H.-P."/>
            <person name="Fraser C.M."/>
            <person name="Smith H.O."/>
            <person name="Woese C.R."/>
            <person name="Venter J.C."/>
        </authorList>
    </citation>
    <scope>NUCLEOTIDE SEQUENCE [LARGE SCALE GENOMIC DNA]</scope>
    <source>
        <strain>ATCC 43067 / DSM 2661 / JAL-1 / JCM 10045 / NBRC 100440</strain>
    </source>
</reference>
<dbReference type="EMBL" id="L77117">
    <property type="protein sequence ID" value="AAB98229.1"/>
    <property type="molecule type" value="Genomic_DNA"/>
</dbReference>
<dbReference type="PIR" id="B64330">
    <property type="entry name" value="B64330"/>
</dbReference>
<dbReference type="RefSeq" id="WP_010869739.1">
    <property type="nucleotide sequence ID" value="NC_000909.1"/>
</dbReference>
<dbReference type="SMR" id="Q57693"/>
<dbReference type="FunCoup" id="Q57693">
    <property type="interactions" value="3"/>
</dbReference>
<dbReference type="STRING" id="243232.MJ_0241"/>
<dbReference type="PaxDb" id="243232-MJ_0241"/>
<dbReference type="EnsemblBacteria" id="AAB98229">
    <property type="protein sequence ID" value="AAB98229"/>
    <property type="gene ID" value="MJ_0241"/>
</dbReference>
<dbReference type="GeneID" id="1451095"/>
<dbReference type="KEGG" id="mja:MJ_0241"/>
<dbReference type="eggNOG" id="arCOG00814">
    <property type="taxonomic scope" value="Archaea"/>
</dbReference>
<dbReference type="HOGENOM" id="CLU_1792142_0_0_2"/>
<dbReference type="InParanoid" id="Q57693"/>
<dbReference type="OrthoDB" id="64432at2157"/>
<dbReference type="Proteomes" id="UP000000805">
    <property type="component" value="Chromosome"/>
</dbReference>
<dbReference type="GO" id="GO:0005829">
    <property type="term" value="C:cytosol"/>
    <property type="evidence" value="ECO:0000318"/>
    <property type="project" value="GO_Central"/>
</dbReference>
<dbReference type="GO" id="GO:0003700">
    <property type="term" value="F:DNA-binding transcription factor activity"/>
    <property type="evidence" value="ECO:0000318"/>
    <property type="project" value="GO_Central"/>
</dbReference>
<dbReference type="GO" id="GO:0006355">
    <property type="term" value="P:regulation of DNA-templated transcription"/>
    <property type="evidence" value="ECO:0000318"/>
    <property type="project" value="GO_Central"/>
</dbReference>
<dbReference type="Gene3D" id="3.30.70.260">
    <property type="match status" value="1"/>
</dbReference>
<dbReference type="Gene3D" id="1.10.10.10">
    <property type="entry name" value="Winged helix-like DNA-binding domain superfamily/Winged helix DNA-binding domain"/>
    <property type="match status" value="1"/>
</dbReference>
<dbReference type="InterPro" id="IPR045865">
    <property type="entry name" value="ACT-like_dom_sf"/>
</dbReference>
<dbReference type="InterPro" id="IPR002912">
    <property type="entry name" value="ACT_dom"/>
</dbReference>
<dbReference type="InterPro" id="IPR030489">
    <property type="entry name" value="TR_Rrf2-type_CS"/>
</dbReference>
<dbReference type="InterPro" id="IPR000944">
    <property type="entry name" value="Tscrpt_reg_Rrf2"/>
</dbReference>
<dbReference type="InterPro" id="IPR036388">
    <property type="entry name" value="WH-like_DNA-bd_sf"/>
</dbReference>
<dbReference type="InterPro" id="IPR036390">
    <property type="entry name" value="WH_DNA-bd_sf"/>
</dbReference>
<dbReference type="PANTHER" id="PTHR33221:SF15">
    <property type="entry name" value="HTH-TYPE TRANSCRIPTIONAL REGULATOR YWGB-RELATED"/>
    <property type="match status" value="1"/>
</dbReference>
<dbReference type="PANTHER" id="PTHR33221">
    <property type="entry name" value="WINGED HELIX-TURN-HELIX TRANSCRIPTIONAL REGULATOR, RRF2 FAMILY"/>
    <property type="match status" value="1"/>
</dbReference>
<dbReference type="Pfam" id="PF01842">
    <property type="entry name" value="ACT"/>
    <property type="match status" value="1"/>
</dbReference>
<dbReference type="Pfam" id="PF02082">
    <property type="entry name" value="Rrf2"/>
    <property type="match status" value="1"/>
</dbReference>
<dbReference type="SUPFAM" id="SSF55021">
    <property type="entry name" value="ACT-like"/>
    <property type="match status" value="1"/>
</dbReference>
<dbReference type="SUPFAM" id="SSF46785">
    <property type="entry name" value="Winged helix' DNA-binding domain"/>
    <property type="match status" value="1"/>
</dbReference>
<dbReference type="PROSITE" id="PS51671">
    <property type="entry name" value="ACT"/>
    <property type="match status" value="1"/>
</dbReference>
<name>Y241_METJA</name>
<organism>
    <name type="scientific">Methanocaldococcus jannaschii (strain ATCC 43067 / DSM 2661 / JAL-1 / JCM 10045 / NBRC 100440)</name>
    <name type="common">Methanococcus jannaschii</name>
    <dbReference type="NCBI Taxonomy" id="243232"/>
    <lineage>
        <taxon>Archaea</taxon>
        <taxon>Methanobacteriati</taxon>
        <taxon>Methanobacteriota</taxon>
        <taxon>Methanomada group</taxon>
        <taxon>Methanococci</taxon>
        <taxon>Methanococcales</taxon>
        <taxon>Methanocaldococcaceae</taxon>
        <taxon>Methanocaldococcus</taxon>
    </lineage>
</organism>
<accession>Q57693</accession>
<proteinExistence type="predicted"/>
<protein>
    <recommendedName>
        <fullName>Uncharacterized protein MJ0241</fullName>
    </recommendedName>
</protein>
<gene>
    <name type="ordered locus">MJ0241</name>
</gene>
<keyword id="KW-1185">Reference proteome</keyword>
<sequence length="145" mass="16280">MKVVGLTKKIMEHLKEPITIKELAKKLNMHPKNLDVKIRVLRDLGLVETKKGRNGGVRLTKEGLYLLEKGEITLGSLKLQIVAKDRIGLLADITSRISKIGGNITSTVLEREGDEVIIYLVVENVDKDEIKNTLEDVVEKISILW</sequence>
<evidence type="ECO:0000255" key="1">
    <source>
        <dbReference type="PROSITE-ProRule" id="PRU01007"/>
    </source>
</evidence>